<proteinExistence type="evidence at protein level"/>
<accession>P82410</accession>
<name>ITR3_MOMCO</name>
<comment type="function">
    <text evidence="5">Inhibits trypsin; probably participates in a plant defense mechanism.</text>
</comment>
<comment type="subcellular location">
    <subcellularLocation>
        <location>Secreted</location>
    </subcellularLocation>
</comment>
<comment type="domain">
    <text evidence="2">The presence of a 'disulfide through disulfide knot' structurally defines this protein as a knottin.</text>
</comment>
<comment type="mass spectrometry"/>
<comment type="similarity">
    <text evidence="4">Belongs to the protease inhibitor I7 (squash-type serine protease inhibitor) family.</text>
</comment>
<protein>
    <recommendedName>
        <fullName>Trypsin inhibitor 3</fullName>
    </recommendedName>
    <alternativeName>
        <fullName>MCoTI-III</fullName>
    </alternativeName>
    <alternativeName>
        <fullName>Trypsin inhibitor III</fullName>
    </alternativeName>
</protein>
<sequence>QRACPRILKKCRRDSDCPGECICKENGYCG</sequence>
<evidence type="ECO:0000250" key="1"/>
<evidence type="ECO:0000250" key="2">
    <source>
        <dbReference type="UniProtKB" id="P10295"/>
    </source>
</evidence>
<evidence type="ECO:0000269" key="3">
    <source>
    </source>
</evidence>
<evidence type="ECO:0000305" key="4"/>
<evidence type="ECO:0000305" key="5">
    <source>
    </source>
</evidence>
<evidence type="ECO:0007829" key="6">
    <source>
        <dbReference type="PDB" id="2LJS"/>
    </source>
</evidence>
<dbReference type="PDB" id="2LJS">
    <property type="method" value="NMR"/>
    <property type="chains" value="A=1-30"/>
</dbReference>
<dbReference type="PDBsum" id="2LJS"/>
<dbReference type="SMR" id="P82410"/>
<dbReference type="MEROPS" id="I07.004"/>
<dbReference type="EvolutionaryTrace" id="P82410"/>
<dbReference type="GO" id="GO:0005576">
    <property type="term" value="C:extracellular region"/>
    <property type="evidence" value="ECO:0007669"/>
    <property type="project" value="UniProtKB-SubCell"/>
</dbReference>
<dbReference type="GO" id="GO:0004867">
    <property type="term" value="F:serine-type endopeptidase inhibitor activity"/>
    <property type="evidence" value="ECO:0000314"/>
    <property type="project" value="CAFA"/>
</dbReference>
<dbReference type="GO" id="GO:1900004">
    <property type="term" value="P:negative regulation of serine-type endopeptidase activity"/>
    <property type="evidence" value="ECO:0000314"/>
    <property type="project" value="CAFA"/>
</dbReference>
<dbReference type="CDD" id="cd00150">
    <property type="entry name" value="PlantTI"/>
    <property type="match status" value="1"/>
</dbReference>
<dbReference type="Gene3D" id="4.10.75.20">
    <property type="match status" value="1"/>
</dbReference>
<dbReference type="InterPro" id="IPR000737">
    <property type="entry name" value="Prot_inh_squash"/>
</dbReference>
<dbReference type="InterPro" id="IPR011052">
    <property type="entry name" value="Proteinase_amylase_inhib_sf"/>
</dbReference>
<dbReference type="Pfam" id="PF00299">
    <property type="entry name" value="Squash"/>
    <property type="match status" value="1"/>
</dbReference>
<dbReference type="SMART" id="SM00286">
    <property type="entry name" value="PTI"/>
    <property type="match status" value="1"/>
</dbReference>
<dbReference type="SUPFAM" id="SSF57027">
    <property type="entry name" value="Plant inhibitors of proteinases and amylases"/>
    <property type="match status" value="1"/>
</dbReference>
<dbReference type="PROSITE" id="PS00286">
    <property type="entry name" value="SQUASH_INHIBITOR"/>
    <property type="match status" value="1"/>
</dbReference>
<reference key="1">
    <citation type="journal article" date="2000" name="Biochemistry">
        <title>Squash trypsin inhibitors from Momordica cochinchinensis exhibit an atypical macrocyclic structure.</title>
        <authorList>
            <person name="Hernandez J.-F."/>
            <person name="Gagnon J."/>
            <person name="Chiche L."/>
            <person name="Nguyen T.M."/>
            <person name="Andrieu J.-P."/>
            <person name="Heitz A."/>
            <person name="Trinh T."/>
            <person name="Pham T.T.C."/>
            <person name="Le Nguyen D."/>
        </authorList>
    </citation>
    <scope>PROTEIN SEQUENCE</scope>
    <scope>FUNCTION</scope>
    <scope>PYROGLUTAMATE FORMATION AT GLN-1</scope>
    <scope>MASS SPECTROMETRY</scope>
    <source>
        <tissue>Seed</tissue>
    </source>
</reference>
<feature type="peptide" id="PRO_0000044390" description="Trypsin inhibitor 3">
    <location>
        <begin position="1"/>
        <end position="30"/>
    </location>
</feature>
<feature type="site" description="Reactive bond">
    <location>
        <begin position="6"/>
        <end position="7"/>
    </location>
</feature>
<feature type="modified residue" description="Pyrrolidone carboxylic acid" evidence="3">
    <location>
        <position position="1"/>
    </location>
</feature>
<feature type="disulfide bond" evidence="1">
    <location>
        <begin position="4"/>
        <end position="21"/>
    </location>
</feature>
<feature type="disulfide bond" evidence="1">
    <location>
        <begin position="11"/>
        <end position="23"/>
    </location>
</feature>
<feature type="disulfide bond" evidence="1">
    <location>
        <begin position="17"/>
        <end position="29"/>
    </location>
</feature>
<feature type="helix" evidence="6">
    <location>
        <begin position="14"/>
        <end position="16"/>
    </location>
</feature>
<feature type="strand" evidence="6">
    <location>
        <begin position="27"/>
        <end position="30"/>
    </location>
</feature>
<organism>
    <name type="scientific">Momordica cochinchinensis</name>
    <name type="common">Spiny bitter cucumber</name>
    <name type="synonym">Muricia cochinchinensis</name>
    <dbReference type="NCBI Taxonomy" id="3674"/>
    <lineage>
        <taxon>Eukaryota</taxon>
        <taxon>Viridiplantae</taxon>
        <taxon>Streptophyta</taxon>
        <taxon>Embryophyta</taxon>
        <taxon>Tracheophyta</taxon>
        <taxon>Spermatophyta</taxon>
        <taxon>Magnoliopsida</taxon>
        <taxon>eudicotyledons</taxon>
        <taxon>Gunneridae</taxon>
        <taxon>Pentapetalae</taxon>
        <taxon>rosids</taxon>
        <taxon>fabids</taxon>
        <taxon>Cucurbitales</taxon>
        <taxon>Cucurbitaceae</taxon>
        <taxon>Momordiceae</taxon>
        <taxon>Momordica</taxon>
    </lineage>
</organism>
<keyword id="KW-0002">3D-structure</keyword>
<keyword id="KW-0903">Direct protein sequencing</keyword>
<keyword id="KW-1015">Disulfide bond</keyword>
<keyword id="KW-0960">Knottin</keyword>
<keyword id="KW-0646">Protease inhibitor</keyword>
<keyword id="KW-0873">Pyrrolidone carboxylic acid</keyword>
<keyword id="KW-0964">Secreted</keyword>
<keyword id="KW-0722">Serine protease inhibitor</keyword>